<name>LPLA_YERPY</name>
<gene>
    <name evidence="1" type="primary">lplA</name>
    <name type="ordered locus">YPK_1839</name>
</gene>
<comment type="function">
    <text evidence="1">Catalyzes both the ATP-dependent activation of exogenously supplied lipoate to lipoyl-AMP and the transfer of the activated lipoyl onto the lipoyl domains of lipoate-dependent enzymes.</text>
</comment>
<comment type="catalytic activity">
    <reaction evidence="1">
        <text>L-lysyl-[lipoyl-carrier protein] + (R)-lipoate + ATP = N(6)-[(R)-lipoyl]-L-lysyl-[lipoyl-carrier protein] + AMP + diphosphate + H(+)</text>
        <dbReference type="Rhea" id="RHEA:49288"/>
        <dbReference type="Rhea" id="RHEA-COMP:10500"/>
        <dbReference type="Rhea" id="RHEA-COMP:10502"/>
        <dbReference type="ChEBI" id="CHEBI:15378"/>
        <dbReference type="ChEBI" id="CHEBI:29969"/>
        <dbReference type="ChEBI" id="CHEBI:30616"/>
        <dbReference type="ChEBI" id="CHEBI:33019"/>
        <dbReference type="ChEBI" id="CHEBI:83088"/>
        <dbReference type="ChEBI" id="CHEBI:83099"/>
        <dbReference type="ChEBI" id="CHEBI:456215"/>
        <dbReference type="EC" id="6.3.1.20"/>
    </reaction>
</comment>
<comment type="pathway">
    <text evidence="1">Protein modification; protein lipoylation via exogenous pathway; protein N(6)-(lipoyl)lysine from lipoate: step 1/2.</text>
</comment>
<comment type="pathway">
    <text evidence="1">Protein modification; protein lipoylation via exogenous pathway; protein N(6)-(lipoyl)lysine from lipoate: step 2/2.</text>
</comment>
<comment type="subunit">
    <text evidence="1">Monomer.</text>
</comment>
<comment type="subcellular location">
    <subcellularLocation>
        <location evidence="1">Cytoplasm</location>
    </subcellularLocation>
</comment>
<comment type="miscellaneous">
    <text evidence="1">In the transfer reaction, the free carboxyl group of lipoic acid is attached via an amide linkage to the epsilon-amino group of a specific lysine residue of lipoyl domains of lipoate-dependent enzymes.</text>
</comment>
<comment type="similarity">
    <text evidence="1">Belongs to the LplA family.</text>
</comment>
<evidence type="ECO:0000255" key="1">
    <source>
        <dbReference type="HAMAP-Rule" id="MF_01602"/>
    </source>
</evidence>
<evidence type="ECO:0000255" key="2">
    <source>
        <dbReference type="PROSITE-ProRule" id="PRU01067"/>
    </source>
</evidence>
<protein>
    <recommendedName>
        <fullName evidence="1">Lipoate-protein ligase A</fullName>
        <ecNumber evidence="1">6.3.1.20</ecNumber>
    </recommendedName>
    <alternativeName>
        <fullName evidence="1">Lipoate--protein ligase</fullName>
    </alternativeName>
</protein>
<keyword id="KW-0067">ATP-binding</keyword>
<keyword id="KW-0963">Cytoplasm</keyword>
<keyword id="KW-0436">Ligase</keyword>
<keyword id="KW-0547">Nucleotide-binding</keyword>
<feature type="chain" id="PRO_1000148121" description="Lipoate-protein ligase A">
    <location>
        <begin position="1"/>
        <end position="338"/>
    </location>
</feature>
<feature type="domain" description="BPL/LPL catalytic" evidence="2">
    <location>
        <begin position="29"/>
        <end position="216"/>
    </location>
</feature>
<feature type="binding site" evidence="1">
    <location>
        <position position="71"/>
    </location>
    <ligand>
        <name>ATP</name>
        <dbReference type="ChEBI" id="CHEBI:30616"/>
    </ligand>
</feature>
<feature type="binding site" evidence="1">
    <location>
        <begin position="76"/>
        <end position="79"/>
    </location>
    <ligand>
        <name>ATP</name>
        <dbReference type="ChEBI" id="CHEBI:30616"/>
    </ligand>
</feature>
<feature type="binding site" evidence="1">
    <location>
        <position position="134"/>
    </location>
    <ligand>
        <name>(R)-lipoate</name>
        <dbReference type="ChEBI" id="CHEBI:83088"/>
    </ligand>
</feature>
<feature type="binding site" evidence="1">
    <location>
        <position position="134"/>
    </location>
    <ligand>
        <name>ATP</name>
        <dbReference type="ChEBI" id="CHEBI:30616"/>
    </ligand>
</feature>
<reference key="1">
    <citation type="submission" date="2008-02" db="EMBL/GenBank/DDBJ databases">
        <title>Complete sequence of Yersinia pseudotuberculosis YPIII.</title>
        <authorList>
            <consortium name="US DOE Joint Genome Institute"/>
            <person name="Copeland A."/>
            <person name="Lucas S."/>
            <person name="Lapidus A."/>
            <person name="Glavina del Rio T."/>
            <person name="Dalin E."/>
            <person name="Tice H."/>
            <person name="Bruce D."/>
            <person name="Goodwin L."/>
            <person name="Pitluck S."/>
            <person name="Munk A.C."/>
            <person name="Brettin T."/>
            <person name="Detter J.C."/>
            <person name="Han C."/>
            <person name="Tapia R."/>
            <person name="Schmutz J."/>
            <person name="Larimer F."/>
            <person name="Land M."/>
            <person name="Hauser L."/>
            <person name="Challacombe J.F."/>
            <person name="Green L."/>
            <person name="Lindler L.E."/>
            <person name="Nikolich M.P."/>
            <person name="Richardson P."/>
        </authorList>
    </citation>
    <scope>NUCLEOTIDE SEQUENCE [LARGE SCALE GENOMIC DNA]</scope>
    <source>
        <strain>YPIII</strain>
    </source>
</reference>
<organism>
    <name type="scientific">Yersinia pseudotuberculosis serotype O:3 (strain YPIII)</name>
    <dbReference type="NCBI Taxonomy" id="502800"/>
    <lineage>
        <taxon>Bacteria</taxon>
        <taxon>Pseudomonadati</taxon>
        <taxon>Pseudomonadota</taxon>
        <taxon>Gammaproteobacteria</taxon>
        <taxon>Enterobacterales</taxon>
        <taxon>Yersiniaceae</taxon>
        <taxon>Yersinia</taxon>
    </lineage>
</organism>
<sequence>MSSLRLLISDSYDPWFNLAVEECIFRQMSPNQRVLFLWRNADTVVIGRAQNPWKECNTRRMEQDGVKLARRSSGGGAVFHDLGNTCFTFMAGKPGYDKTISTQIILNALASLGIQATASGRNDLVVINGEDERKVSGSAYKETKDRGFHHGTLLLNADLSRLADYLNPDPKKLQAKGITSVRSRVTNLVELLPGIDHGKIRTAIEQAFFAYYDEQVSAEVISPQSLPNLPGFTEQFAKQSSWEWNFGQAPAFSHVVDTRFIWGGIELHFDVLHGAIDRCQIFTDSLNPTPLEALAQRLQGAAYRPDAIDKICQHWIDDFPELQTELQQACHWLVEVLR</sequence>
<dbReference type="EC" id="6.3.1.20" evidence="1"/>
<dbReference type="EMBL" id="CP000950">
    <property type="protein sequence ID" value="ACA68130.1"/>
    <property type="molecule type" value="Genomic_DNA"/>
</dbReference>
<dbReference type="RefSeq" id="WP_002211816.1">
    <property type="nucleotide sequence ID" value="NZ_CP009792.1"/>
</dbReference>
<dbReference type="SMR" id="B1JJ36"/>
<dbReference type="KEGG" id="ypy:YPK_1839"/>
<dbReference type="PATRIC" id="fig|502800.11.peg.2509"/>
<dbReference type="UniPathway" id="UPA00537">
    <property type="reaction ID" value="UER00594"/>
</dbReference>
<dbReference type="UniPathway" id="UPA00537">
    <property type="reaction ID" value="UER00595"/>
</dbReference>
<dbReference type="GO" id="GO:0005829">
    <property type="term" value="C:cytosol"/>
    <property type="evidence" value="ECO:0007669"/>
    <property type="project" value="TreeGrafter"/>
</dbReference>
<dbReference type="GO" id="GO:0005524">
    <property type="term" value="F:ATP binding"/>
    <property type="evidence" value="ECO:0007669"/>
    <property type="project" value="UniProtKB-KW"/>
</dbReference>
<dbReference type="GO" id="GO:0016979">
    <property type="term" value="F:lipoate-protein ligase activity"/>
    <property type="evidence" value="ECO:0007669"/>
    <property type="project" value="UniProtKB-UniRule"/>
</dbReference>
<dbReference type="GO" id="GO:0017118">
    <property type="term" value="F:lipoyltransferase activity"/>
    <property type="evidence" value="ECO:0007669"/>
    <property type="project" value="TreeGrafter"/>
</dbReference>
<dbReference type="GO" id="GO:0036211">
    <property type="term" value="P:protein modification process"/>
    <property type="evidence" value="ECO:0007669"/>
    <property type="project" value="InterPro"/>
</dbReference>
<dbReference type="CDD" id="cd16443">
    <property type="entry name" value="LplA"/>
    <property type="match status" value="1"/>
</dbReference>
<dbReference type="FunFam" id="3.30.930.10:FF:000024">
    <property type="entry name" value="Lipoate-protein ligase A"/>
    <property type="match status" value="1"/>
</dbReference>
<dbReference type="Gene3D" id="3.30.930.10">
    <property type="entry name" value="Bira Bifunctional Protein, Domain 2"/>
    <property type="match status" value="1"/>
</dbReference>
<dbReference type="Gene3D" id="3.30.390.50">
    <property type="entry name" value="CO dehydrogenase flavoprotein, C-terminal domain"/>
    <property type="match status" value="1"/>
</dbReference>
<dbReference type="HAMAP" id="MF_01602">
    <property type="entry name" value="LplA"/>
    <property type="match status" value="1"/>
</dbReference>
<dbReference type="InterPro" id="IPR045864">
    <property type="entry name" value="aa-tRNA-synth_II/BPL/LPL"/>
</dbReference>
<dbReference type="InterPro" id="IPR004143">
    <property type="entry name" value="BPL_LPL_catalytic"/>
</dbReference>
<dbReference type="InterPro" id="IPR023741">
    <property type="entry name" value="Lipoate_ligase_A"/>
</dbReference>
<dbReference type="InterPro" id="IPR019491">
    <property type="entry name" value="Lipoate_protein_ligase_C"/>
</dbReference>
<dbReference type="InterPro" id="IPR004562">
    <property type="entry name" value="LipoylTrfase_LipoateP_Ligase"/>
</dbReference>
<dbReference type="NCBIfam" id="TIGR00545">
    <property type="entry name" value="lipoyltrans"/>
    <property type="match status" value="1"/>
</dbReference>
<dbReference type="PANTHER" id="PTHR12561">
    <property type="entry name" value="LIPOATE-PROTEIN LIGASE"/>
    <property type="match status" value="1"/>
</dbReference>
<dbReference type="PANTHER" id="PTHR12561:SF3">
    <property type="entry name" value="LIPOYLTRANSFERASE 1, MITOCHONDRIAL"/>
    <property type="match status" value="1"/>
</dbReference>
<dbReference type="Pfam" id="PF10437">
    <property type="entry name" value="Lip_prot_lig_C"/>
    <property type="match status" value="1"/>
</dbReference>
<dbReference type="Pfam" id="PF21948">
    <property type="entry name" value="LplA-B_cat"/>
    <property type="match status" value="1"/>
</dbReference>
<dbReference type="SUPFAM" id="SSF55681">
    <property type="entry name" value="Class II aaRS and biotin synthetases"/>
    <property type="match status" value="1"/>
</dbReference>
<dbReference type="SUPFAM" id="SSF82649">
    <property type="entry name" value="SufE/NifU"/>
    <property type="match status" value="1"/>
</dbReference>
<dbReference type="PROSITE" id="PS51733">
    <property type="entry name" value="BPL_LPL_CATALYTIC"/>
    <property type="match status" value="1"/>
</dbReference>
<accession>B1JJ36</accession>
<proteinExistence type="inferred from homology"/>